<proteinExistence type="inferred from homology"/>
<gene>
    <name type="ordered locus">SZO_12220</name>
</gene>
<evidence type="ECO:0000255" key="1">
    <source>
        <dbReference type="HAMAP-Rule" id="MF_00636"/>
    </source>
</evidence>
<protein>
    <recommendedName>
        <fullName evidence="1">Nucleotide-binding protein SZO_12220</fullName>
    </recommendedName>
</protein>
<comment type="function">
    <text evidence="1">Displays ATPase and GTPase activities.</text>
</comment>
<comment type="similarity">
    <text evidence="1">Belongs to the RapZ-like family.</text>
</comment>
<organism>
    <name type="scientific">Streptococcus equi subsp. zooepidemicus (strain H70)</name>
    <dbReference type="NCBI Taxonomy" id="553483"/>
    <lineage>
        <taxon>Bacteria</taxon>
        <taxon>Bacillati</taxon>
        <taxon>Bacillota</taxon>
        <taxon>Bacilli</taxon>
        <taxon>Lactobacillales</taxon>
        <taxon>Streptococcaceae</taxon>
        <taxon>Streptococcus</taxon>
    </lineage>
</organism>
<keyword id="KW-0067">ATP-binding</keyword>
<keyword id="KW-0342">GTP-binding</keyword>
<keyword id="KW-0547">Nucleotide-binding</keyword>
<accession>C0MHH2</accession>
<reference key="1">
    <citation type="journal article" date="2009" name="PLoS Pathog.">
        <title>Genomic evidence for the evolution of Streptococcus equi: host restriction, increased virulence, and genetic exchange with human pathogens.</title>
        <authorList>
            <person name="Holden M.T.G."/>
            <person name="Heather Z."/>
            <person name="Paillot R."/>
            <person name="Steward K.F."/>
            <person name="Webb K."/>
            <person name="Ainslie F."/>
            <person name="Jourdan T."/>
            <person name="Bason N.C."/>
            <person name="Holroyd N.E."/>
            <person name="Mungall K."/>
            <person name="Quail M.A."/>
            <person name="Sanders M."/>
            <person name="Simmonds M."/>
            <person name="Willey D."/>
            <person name="Brooks K."/>
            <person name="Aanensen D.M."/>
            <person name="Spratt B.G."/>
            <person name="Jolley K.A."/>
            <person name="Maiden M.C.J."/>
            <person name="Kehoe M."/>
            <person name="Chanter N."/>
            <person name="Bentley S.D."/>
            <person name="Robinson C."/>
            <person name="Maskell D.J."/>
            <person name="Parkhill J."/>
            <person name="Waller A.S."/>
        </authorList>
    </citation>
    <scope>NUCLEOTIDE SEQUENCE [LARGE SCALE GENOMIC DNA]</scope>
    <source>
        <strain>H70</strain>
    </source>
</reference>
<sequence length="296" mass="33763">MSDKQINLVIVTGMSGAGKTVAIQSFEDLGYFTVDNMPPALVPKFLELLERTNETQKVALVVDMRSRRFFKEINSILDHIELNANLKLRILFLDATDSELVSRYKETRRSHPLAADGRVLDGIRRERELLVPLKSMSQHVVNTTDLTPRQLRKVISDQFSSESDQASFRIEVMSFGFKYGLPLDADLVFDVRFLPNPYYQVALREQTGLDQAVFDYVMTHQESEAFYNHLLDLIVPILPAYQKEGKSVLTIAIGCTGGQHRSVAFAHRLAQDLTADWPLHESHRDINRRKETVNRS</sequence>
<feature type="chain" id="PRO_0000383294" description="Nucleotide-binding protein SZO_12220">
    <location>
        <begin position="1"/>
        <end position="296"/>
    </location>
</feature>
<feature type="binding site" evidence="1">
    <location>
        <begin position="13"/>
        <end position="20"/>
    </location>
    <ligand>
        <name>ATP</name>
        <dbReference type="ChEBI" id="CHEBI:30616"/>
    </ligand>
</feature>
<feature type="binding site" evidence="1">
    <location>
        <begin position="63"/>
        <end position="66"/>
    </location>
    <ligand>
        <name>GTP</name>
        <dbReference type="ChEBI" id="CHEBI:37565"/>
    </ligand>
</feature>
<name>Y1222_STRS7</name>
<dbReference type="EMBL" id="FM204884">
    <property type="protein sequence ID" value="CAW99702.1"/>
    <property type="molecule type" value="Genomic_DNA"/>
</dbReference>
<dbReference type="SMR" id="C0MHH2"/>
<dbReference type="KEGG" id="seq:SZO_12220"/>
<dbReference type="eggNOG" id="COG1660">
    <property type="taxonomic scope" value="Bacteria"/>
</dbReference>
<dbReference type="HOGENOM" id="CLU_059558_0_0_9"/>
<dbReference type="Proteomes" id="UP000001368">
    <property type="component" value="Chromosome"/>
</dbReference>
<dbReference type="GO" id="GO:0005524">
    <property type="term" value="F:ATP binding"/>
    <property type="evidence" value="ECO:0007669"/>
    <property type="project" value="UniProtKB-UniRule"/>
</dbReference>
<dbReference type="GO" id="GO:0005525">
    <property type="term" value="F:GTP binding"/>
    <property type="evidence" value="ECO:0007669"/>
    <property type="project" value="UniProtKB-UniRule"/>
</dbReference>
<dbReference type="Gene3D" id="3.40.50.300">
    <property type="entry name" value="P-loop containing nucleotide triphosphate hydrolases"/>
    <property type="match status" value="1"/>
</dbReference>
<dbReference type="HAMAP" id="MF_00636">
    <property type="entry name" value="RapZ_like"/>
    <property type="match status" value="1"/>
</dbReference>
<dbReference type="InterPro" id="IPR027417">
    <property type="entry name" value="P-loop_NTPase"/>
</dbReference>
<dbReference type="InterPro" id="IPR005337">
    <property type="entry name" value="RapZ-like"/>
</dbReference>
<dbReference type="InterPro" id="IPR053930">
    <property type="entry name" value="RapZ-like_N"/>
</dbReference>
<dbReference type="InterPro" id="IPR053931">
    <property type="entry name" value="RapZ_C"/>
</dbReference>
<dbReference type="NCBIfam" id="NF003828">
    <property type="entry name" value="PRK05416.1"/>
    <property type="match status" value="1"/>
</dbReference>
<dbReference type="PANTHER" id="PTHR30448">
    <property type="entry name" value="RNASE ADAPTER PROTEIN RAPZ"/>
    <property type="match status" value="1"/>
</dbReference>
<dbReference type="PANTHER" id="PTHR30448:SF0">
    <property type="entry name" value="RNASE ADAPTER PROTEIN RAPZ"/>
    <property type="match status" value="1"/>
</dbReference>
<dbReference type="Pfam" id="PF22740">
    <property type="entry name" value="PapZ_C"/>
    <property type="match status" value="1"/>
</dbReference>
<dbReference type="Pfam" id="PF03668">
    <property type="entry name" value="RapZ-like_N"/>
    <property type="match status" value="1"/>
</dbReference>
<dbReference type="PIRSF" id="PIRSF005052">
    <property type="entry name" value="P-loopkin"/>
    <property type="match status" value="1"/>
</dbReference>
<dbReference type="SUPFAM" id="SSF52540">
    <property type="entry name" value="P-loop containing nucleoside triphosphate hydrolases"/>
    <property type="match status" value="1"/>
</dbReference>